<feature type="chain" id="PRO_0000187854" description="Peptidyl-tRNA hydrolase">
    <location>
        <begin position="1"/>
        <end position="191"/>
    </location>
</feature>
<feature type="active site" description="Proton acceptor" evidence="1">
    <location>
        <position position="21"/>
    </location>
</feature>
<feature type="binding site" evidence="1">
    <location>
        <position position="16"/>
    </location>
    <ligand>
        <name>tRNA</name>
        <dbReference type="ChEBI" id="CHEBI:17843"/>
    </ligand>
</feature>
<feature type="binding site" evidence="1">
    <location>
        <position position="67"/>
    </location>
    <ligand>
        <name>tRNA</name>
        <dbReference type="ChEBI" id="CHEBI:17843"/>
    </ligand>
</feature>
<feature type="binding site" evidence="1">
    <location>
        <position position="69"/>
    </location>
    <ligand>
        <name>tRNA</name>
        <dbReference type="ChEBI" id="CHEBI:17843"/>
    </ligand>
</feature>
<feature type="binding site" evidence="1">
    <location>
        <position position="115"/>
    </location>
    <ligand>
        <name>tRNA</name>
        <dbReference type="ChEBI" id="CHEBI:17843"/>
    </ligand>
</feature>
<feature type="site" description="Discriminates between blocked and unblocked aminoacyl-tRNA" evidence="1">
    <location>
        <position position="11"/>
    </location>
</feature>
<feature type="site" description="Stabilizes the basic form of H active site to accept a proton" evidence="1">
    <location>
        <position position="94"/>
    </location>
</feature>
<evidence type="ECO:0000255" key="1">
    <source>
        <dbReference type="HAMAP-Rule" id="MF_00083"/>
    </source>
</evidence>
<sequence>MKLKLIVGLSNPINLYYNTRHNIGSWYIKFLAKKYKKNLIKNKKYCFYYIDVKIGDYYSKLVIPDTYMNVNGTIIYNITNFYKIYSNEMLIVHDDLDLDTGIARFKFNHKNSTHNGIKSIYKSFGAKCIFNTLRIGIGRPKLNKNINSYLLNNPSPKEEILIKKTITKCIKCTDVLIKKNKDHAMNILHKK</sequence>
<accession>Q8D2K4</accession>
<name>PTH_WIGBR</name>
<proteinExistence type="inferred from homology"/>
<reference key="1">
    <citation type="journal article" date="2002" name="Nat. Genet.">
        <title>Genome sequence of the endocellular obligate symbiont of tsetse flies, Wigglesworthia glossinidia.</title>
        <authorList>
            <person name="Akman L."/>
            <person name="Yamashita A."/>
            <person name="Watanabe H."/>
            <person name="Oshima K."/>
            <person name="Shiba T."/>
            <person name="Hattori M."/>
            <person name="Aksoy S."/>
        </authorList>
    </citation>
    <scope>NUCLEOTIDE SEQUENCE [LARGE SCALE GENOMIC DNA]</scope>
</reference>
<gene>
    <name evidence="1" type="primary">pth</name>
    <name type="ordered locus">WIGBR3500</name>
</gene>
<comment type="function">
    <text evidence="1">Hydrolyzes ribosome-free peptidyl-tRNAs (with 1 or more amino acids incorporated), which drop off the ribosome during protein synthesis, or as a result of ribosome stalling.</text>
</comment>
<comment type="function">
    <text evidence="1">Catalyzes the release of premature peptidyl moieties from peptidyl-tRNA molecules trapped in stalled 50S ribosomal subunits, and thus maintains levels of free tRNAs and 50S ribosomes.</text>
</comment>
<comment type="catalytic activity">
    <reaction evidence="1">
        <text>an N-acyl-L-alpha-aminoacyl-tRNA + H2O = an N-acyl-L-amino acid + a tRNA + H(+)</text>
        <dbReference type="Rhea" id="RHEA:54448"/>
        <dbReference type="Rhea" id="RHEA-COMP:10123"/>
        <dbReference type="Rhea" id="RHEA-COMP:13883"/>
        <dbReference type="ChEBI" id="CHEBI:15377"/>
        <dbReference type="ChEBI" id="CHEBI:15378"/>
        <dbReference type="ChEBI" id="CHEBI:59874"/>
        <dbReference type="ChEBI" id="CHEBI:78442"/>
        <dbReference type="ChEBI" id="CHEBI:138191"/>
        <dbReference type="EC" id="3.1.1.29"/>
    </reaction>
</comment>
<comment type="subunit">
    <text evidence="1">Monomer.</text>
</comment>
<comment type="subcellular location">
    <subcellularLocation>
        <location evidence="1">Cytoplasm</location>
    </subcellularLocation>
</comment>
<comment type="similarity">
    <text evidence="1">Belongs to the PTH family.</text>
</comment>
<dbReference type="EC" id="3.1.1.29" evidence="1"/>
<dbReference type="EMBL" id="BA000021">
    <property type="protein sequence ID" value="BAC24496.1"/>
    <property type="molecule type" value="Genomic_DNA"/>
</dbReference>
<dbReference type="SMR" id="Q8D2K4"/>
<dbReference type="STRING" id="36870.gene:10368850"/>
<dbReference type="KEGG" id="wbr:pth"/>
<dbReference type="eggNOG" id="COG0193">
    <property type="taxonomic scope" value="Bacteria"/>
</dbReference>
<dbReference type="HOGENOM" id="CLU_062456_3_1_6"/>
<dbReference type="OrthoDB" id="9800507at2"/>
<dbReference type="Proteomes" id="UP000000562">
    <property type="component" value="Chromosome"/>
</dbReference>
<dbReference type="GO" id="GO:0005737">
    <property type="term" value="C:cytoplasm"/>
    <property type="evidence" value="ECO:0007669"/>
    <property type="project" value="UniProtKB-SubCell"/>
</dbReference>
<dbReference type="GO" id="GO:0004045">
    <property type="term" value="F:peptidyl-tRNA hydrolase activity"/>
    <property type="evidence" value="ECO:0007669"/>
    <property type="project" value="UniProtKB-UniRule"/>
</dbReference>
<dbReference type="GO" id="GO:0000049">
    <property type="term" value="F:tRNA binding"/>
    <property type="evidence" value="ECO:0007669"/>
    <property type="project" value="UniProtKB-UniRule"/>
</dbReference>
<dbReference type="GO" id="GO:0006515">
    <property type="term" value="P:protein quality control for misfolded or incompletely synthesized proteins"/>
    <property type="evidence" value="ECO:0007669"/>
    <property type="project" value="UniProtKB-UniRule"/>
</dbReference>
<dbReference type="GO" id="GO:0072344">
    <property type="term" value="P:rescue of stalled ribosome"/>
    <property type="evidence" value="ECO:0007669"/>
    <property type="project" value="UniProtKB-UniRule"/>
</dbReference>
<dbReference type="CDD" id="cd00462">
    <property type="entry name" value="PTH"/>
    <property type="match status" value="1"/>
</dbReference>
<dbReference type="Gene3D" id="3.40.50.1470">
    <property type="entry name" value="Peptidyl-tRNA hydrolase"/>
    <property type="match status" value="1"/>
</dbReference>
<dbReference type="HAMAP" id="MF_00083">
    <property type="entry name" value="Pept_tRNA_hydro_bact"/>
    <property type="match status" value="1"/>
</dbReference>
<dbReference type="InterPro" id="IPR001328">
    <property type="entry name" value="Pept_tRNA_hydro"/>
</dbReference>
<dbReference type="InterPro" id="IPR036416">
    <property type="entry name" value="Pept_tRNA_hydro_sf"/>
</dbReference>
<dbReference type="NCBIfam" id="TIGR00447">
    <property type="entry name" value="pth"/>
    <property type="match status" value="1"/>
</dbReference>
<dbReference type="PANTHER" id="PTHR17224">
    <property type="entry name" value="PEPTIDYL-TRNA HYDROLASE"/>
    <property type="match status" value="1"/>
</dbReference>
<dbReference type="PANTHER" id="PTHR17224:SF1">
    <property type="entry name" value="PEPTIDYL-TRNA HYDROLASE"/>
    <property type="match status" value="1"/>
</dbReference>
<dbReference type="Pfam" id="PF01195">
    <property type="entry name" value="Pept_tRNA_hydro"/>
    <property type="match status" value="1"/>
</dbReference>
<dbReference type="SUPFAM" id="SSF53178">
    <property type="entry name" value="Peptidyl-tRNA hydrolase-like"/>
    <property type="match status" value="1"/>
</dbReference>
<organism>
    <name type="scientific">Wigglesworthia glossinidia brevipalpis</name>
    <dbReference type="NCBI Taxonomy" id="36870"/>
    <lineage>
        <taxon>Bacteria</taxon>
        <taxon>Pseudomonadati</taxon>
        <taxon>Pseudomonadota</taxon>
        <taxon>Gammaproteobacteria</taxon>
        <taxon>Enterobacterales</taxon>
        <taxon>Erwiniaceae</taxon>
        <taxon>Wigglesworthia</taxon>
    </lineage>
</organism>
<protein>
    <recommendedName>
        <fullName evidence="1">Peptidyl-tRNA hydrolase</fullName>
        <shortName evidence="1">Pth</shortName>
        <ecNumber evidence="1">3.1.1.29</ecNumber>
    </recommendedName>
</protein>
<keyword id="KW-0963">Cytoplasm</keyword>
<keyword id="KW-0378">Hydrolase</keyword>
<keyword id="KW-1185">Reference proteome</keyword>
<keyword id="KW-0694">RNA-binding</keyword>
<keyword id="KW-0820">tRNA-binding</keyword>